<sequence length="522" mass="57061">MLCALILWSGLLGAARASPISVPRECAKGSEVWCQDLQAAAKCRAVRHCQSAVWNKPTVKSLPCSVCQDVAAAAGNGVNPGATESDILTSVMKTCEWLPSQESSAKCKWMVNNHSAAVLSMLSGAQETDLASVCTALTLCEPLQRHLAETTSERPLTQEDANEVMAPFLSNGALSFHPSQMPEGAVCHDCVQLISLLQDALESNLTLAEVTVQNQCQSMGPGLAALCENYIHRQFVPAKQTLQGLPPQEVCRKGGFCERESAHWLTRVAAVDGVPSLEMEMPRTNELQMQLGLTCDVCLNLVQELDKWLVTNSTEALISHTLERVCTVVPEPLVQQCITLVDTYSPELVQLMSKVTPEKVCETIKLCGSKRRARSISRAVATTPSLPVDEENQGSFCQGCKRLLGMSSQNLDHKSTKRDILNAFKGGCRILPLPYVMQCNRFVAEYEPVLIESLKFMMNPTDLCKKMGACHGPKTPLLGTDQCVMGPSFWCKSPEAAEMCNALEHCQRLVWKKPVSKINEQP</sequence>
<evidence type="ECO:0000250" key="1"/>
<evidence type="ECO:0000255" key="2"/>
<evidence type="ECO:0000255" key="3">
    <source>
        <dbReference type="PROSITE-ProRule" id="PRU00414"/>
    </source>
</evidence>
<evidence type="ECO:0000255" key="4">
    <source>
        <dbReference type="PROSITE-ProRule" id="PRU00415"/>
    </source>
</evidence>
<evidence type="ECO:0000269" key="5">
    <source>
    </source>
</evidence>
<evidence type="ECO:0000305" key="6"/>
<reference key="1">
    <citation type="journal article" date="2005" name="Science">
        <title>The transcriptional landscape of the mammalian genome.</title>
        <authorList>
            <person name="Carninci P."/>
            <person name="Kasukawa T."/>
            <person name="Katayama S."/>
            <person name="Gough J."/>
            <person name="Frith M.C."/>
            <person name="Maeda N."/>
            <person name="Oyama R."/>
            <person name="Ravasi T."/>
            <person name="Lenhard B."/>
            <person name="Wells C."/>
            <person name="Kodzius R."/>
            <person name="Shimokawa K."/>
            <person name="Bajic V.B."/>
            <person name="Brenner S.E."/>
            <person name="Batalov S."/>
            <person name="Forrest A.R."/>
            <person name="Zavolan M."/>
            <person name="Davis M.J."/>
            <person name="Wilming L.G."/>
            <person name="Aidinis V."/>
            <person name="Allen J.E."/>
            <person name="Ambesi-Impiombato A."/>
            <person name="Apweiler R."/>
            <person name="Aturaliya R.N."/>
            <person name="Bailey T.L."/>
            <person name="Bansal M."/>
            <person name="Baxter L."/>
            <person name="Beisel K.W."/>
            <person name="Bersano T."/>
            <person name="Bono H."/>
            <person name="Chalk A.M."/>
            <person name="Chiu K.P."/>
            <person name="Choudhary V."/>
            <person name="Christoffels A."/>
            <person name="Clutterbuck D.R."/>
            <person name="Crowe M.L."/>
            <person name="Dalla E."/>
            <person name="Dalrymple B.P."/>
            <person name="de Bono B."/>
            <person name="Della Gatta G."/>
            <person name="di Bernardo D."/>
            <person name="Down T."/>
            <person name="Engstrom P."/>
            <person name="Fagiolini M."/>
            <person name="Faulkner G."/>
            <person name="Fletcher C.F."/>
            <person name="Fukushima T."/>
            <person name="Furuno M."/>
            <person name="Futaki S."/>
            <person name="Gariboldi M."/>
            <person name="Georgii-Hemming P."/>
            <person name="Gingeras T.R."/>
            <person name="Gojobori T."/>
            <person name="Green R.E."/>
            <person name="Gustincich S."/>
            <person name="Harbers M."/>
            <person name="Hayashi Y."/>
            <person name="Hensch T.K."/>
            <person name="Hirokawa N."/>
            <person name="Hill D."/>
            <person name="Huminiecki L."/>
            <person name="Iacono M."/>
            <person name="Ikeo K."/>
            <person name="Iwama A."/>
            <person name="Ishikawa T."/>
            <person name="Jakt M."/>
            <person name="Kanapin A."/>
            <person name="Katoh M."/>
            <person name="Kawasawa Y."/>
            <person name="Kelso J."/>
            <person name="Kitamura H."/>
            <person name="Kitano H."/>
            <person name="Kollias G."/>
            <person name="Krishnan S.P."/>
            <person name="Kruger A."/>
            <person name="Kummerfeld S.K."/>
            <person name="Kurochkin I.V."/>
            <person name="Lareau L.F."/>
            <person name="Lazarevic D."/>
            <person name="Lipovich L."/>
            <person name="Liu J."/>
            <person name="Liuni S."/>
            <person name="McWilliam S."/>
            <person name="Madan Babu M."/>
            <person name="Madera M."/>
            <person name="Marchionni L."/>
            <person name="Matsuda H."/>
            <person name="Matsuzawa S."/>
            <person name="Miki H."/>
            <person name="Mignone F."/>
            <person name="Miyake S."/>
            <person name="Morris K."/>
            <person name="Mottagui-Tabar S."/>
            <person name="Mulder N."/>
            <person name="Nakano N."/>
            <person name="Nakauchi H."/>
            <person name="Ng P."/>
            <person name="Nilsson R."/>
            <person name="Nishiguchi S."/>
            <person name="Nishikawa S."/>
            <person name="Nori F."/>
            <person name="Ohara O."/>
            <person name="Okazaki Y."/>
            <person name="Orlando V."/>
            <person name="Pang K.C."/>
            <person name="Pavan W.J."/>
            <person name="Pavesi G."/>
            <person name="Pesole G."/>
            <person name="Petrovsky N."/>
            <person name="Piazza S."/>
            <person name="Reed J."/>
            <person name="Reid J.F."/>
            <person name="Ring B.Z."/>
            <person name="Ringwald M."/>
            <person name="Rost B."/>
            <person name="Ruan Y."/>
            <person name="Salzberg S.L."/>
            <person name="Sandelin A."/>
            <person name="Schneider C."/>
            <person name="Schoenbach C."/>
            <person name="Sekiguchi K."/>
            <person name="Semple C.A."/>
            <person name="Seno S."/>
            <person name="Sessa L."/>
            <person name="Sheng Y."/>
            <person name="Shibata Y."/>
            <person name="Shimada H."/>
            <person name="Shimada K."/>
            <person name="Silva D."/>
            <person name="Sinclair B."/>
            <person name="Sperling S."/>
            <person name="Stupka E."/>
            <person name="Sugiura K."/>
            <person name="Sultana R."/>
            <person name="Takenaka Y."/>
            <person name="Taki K."/>
            <person name="Tammoja K."/>
            <person name="Tan S.L."/>
            <person name="Tang S."/>
            <person name="Taylor M.S."/>
            <person name="Tegner J."/>
            <person name="Teichmann S.A."/>
            <person name="Ueda H.R."/>
            <person name="van Nimwegen E."/>
            <person name="Verardo R."/>
            <person name="Wei C.L."/>
            <person name="Yagi K."/>
            <person name="Yamanishi H."/>
            <person name="Zabarovsky E."/>
            <person name="Zhu S."/>
            <person name="Zimmer A."/>
            <person name="Hide W."/>
            <person name="Bult C."/>
            <person name="Grimmond S.M."/>
            <person name="Teasdale R.D."/>
            <person name="Liu E.T."/>
            <person name="Brusic V."/>
            <person name="Quackenbush J."/>
            <person name="Wahlestedt C."/>
            <person name="Mattick J.S."/>
            <person name="Hume D.A."/>
            <person name="Kai C."/>
            <person name="Sasaki D."/>
            <person name="Tomaru Y."/>
            <person name="Fukuda S."/>
            <person name="Kanamori-Katayama M."/>
            <person name="Suzuki M."/>
            <person name="Aoki J."/>
            <person name="Arakawa T."/>
            <person name="Iida J."/>
            <person name="Imamura K."/>
            <person name="Itoh M."/>
            <person name="Kato T."/>
            <person name="Kawaji H."/>
            <person name="Kawagashira N."/>
            <person name="Kawashima T."/>
            <person name="Kojima M."/>
            <person name="Kondo S."/>
            <person name="Konno H."/>
            <person name="Nakano K."/>
            <person name="Ninomiya N."/>
            <person name="Nishio T."/>
            <person name="Okada M."/>
            <person name="Plessy C."/>
            <person name="Shibata K."/>
            <person name="Shiraki T."/>
            <person name="Suzuki S."/>
            <person name="Tagami M."/>
            <person name="Waki K."/>
            <person name="Watahiki A."/>
            <person name="Okamura-Oho Y."/>
            <person name="Suzuki H."/>
            <person name="Kawai J."/>
            <person name="Hayashizaki Y."/>
        </authorList>
    </citation>
    <scope>NUCLEOTIDE SEQUENCE [LARGE SCALE MRNA]</scope>
    <source>
        <strain>C57BL/6J</strain>
        <tissue>Eye</tissue>
        <tissue>Skin</tissue>
        <tissue>Tongue</tissue>
    </source>
</reference>
<reference key="2">
    <citation type="journal article" date="2005" name="Mol. Cell. Proteomics">
        <title>High throughput quantitative glycomics and glycoform-focused proteomics of murine dermis and epidermis.</title>
        <authorList>
            <person name="Uematsu R."/>
            <person name="Furukawa J."/>
            <person name="Nakagawa H."/>
            <person name="Shinohara Y."/>
            <person name="Deguchi K."/>
            <person name="Monde K."/>
            <person name="Nishimura S."/>
        </authorList>
    </citation>
    <scope>GLYCOSYLATION [LARGE SCALE ANALYSIS] AT ASN-312</scope>
    <source>
        <tissue>Epidermis</tissue>
    </source>
</reference>
<feature type="signal peptide" evidence="2">
    <location>
        <begin position="1"/>
        <end position="17"/>
    </location>
</feature>
<feature type="propeptide" id="PRO_0000280315" evidence="1">
    <location>
        <begin position="18"/>
        <end position="59"/>
    </location>
</feature>
<feature type="chain" id="PRO_0000280316" description="Saposin A-like" evidence="1">
    <location>
        <begin position="61"/>
        <end position="144"/>
    </location>
</feature>
<feature type="propeptide" id="PRO_0000280317" evidence="1">
    <location>
        <begin position="146"/>
        <end position="183"/>
    </location>
</feature>
<feature type="chain" id="PRO_0000280318" description="Saposin B-Val-like" evidence="1">
    <location>
        <begin position="184"/>
        <end position="260"/>
    </location>
</feature>
<feature type="chain" id="PRO_0000280319" description="Saposin B-like" evidence="1">
    <location>
        <begin position="184"/>
        <end position="259"/>
    </location>
</feature>
<feature type="propeptide" id="PRO_0000280320" evidence="1">
    <location>
        <begin position="261"/>
        <end position="290"/>
    </location>
</feature>
<feature type="chain" id="PRO_0000280321" description="Saposin C-like" evidence="1">
    <location>
        <begin position="291"/>
        <end position="370"/>
    </location>
</feature>
<feature type="propeptide" id="PRO_0000280322" evidence="1">
    <location>
        <begin position="371"/>
        <end position="392"/>
    </location>
</feature>
<feature type="chain" id="PRO_0000280323" description="Saposin D-like" evidence="1">
    <location>
        <begin position="393"/>
        <end position="474"/>
    </location>
</feature>
<feature type="propeptide" id="PRO_0000280324" evidence="1">
    <location>
        <begin position="475"/>
        <end position="522"/>
    </location>
</feature>
<feature type="domain" description="Saposin A-type 1" evidence="3">
    <location>
        <begin position="19"/>
        <end position="59"/>
    </location>
</feature>
<feature type="domain" description="Saposin B-type 1" evidence="4">
    <location>
        <begin position="60"/>
        <end position="144"/>
    </location>
</feature>
<feature type="domain" description="Saposin B-type 2" evidence="4">
    <location>
        <begin position="183"/>
        <end position="261"/>
    </location>
</feature>
<feature type="domain" description="Saposin B-type 3" evidence="4">
    <location>
        <begin position="291"/>
        <end position="371"/>
    </location>
</feature>
<feature type="domain" description="Saposin B-type 4" evidence="4">
    <location>
        <begin position="393"/>
        <end position="474"/>
    </location>
</feature>
<feature type="domain" description="Saposin A-type 2" evidence="3">
    <location>
        <begin position="476"/>
        <end position="516"/>
    </location>
</feature>
<feature type="glycosylation site" description="N-linked (GlcNAc...) asparagine" evidence="4">
    <location>
        <position position="204"/>
    </location>
</feature>
<feature type="glycosylation site" description="N-linked (GlcNAc...) (high mannose) asparagine" evidence="4 5">
    <location>
        <position position="312"/>
    </location>
</feature>
<feature type="disulfide bond" evidence="4">
    <location>
        <begin position="64"/>
        <end position="140"/>
    </location>
</feature>
<feature type="disulfide bond" evidence="4">
    <location>
        <begin position="67"/>
        <end position="134"/>
    </location>
</feature>
<feature type="disulfide bond" evidence="4">
    <location>
        <begin position="95"/>
        <end position="107"/>
    </location>
</feature>
<feature type="disulfide bond" evidence="4">
    <location>
        <begin position="187"/>
        <end position="257"/>
    </location>
</feature>
<feature type="disulfide bond" evidence="4">
    <location>
        <begin position="190"/>
        <end position="251"/>
    </location>
</feature>
<feature type="disulfide bond" evidence="4">
    <location>
        <begin position="216"/>
        <end position="227"/>
    </location>
</feature>
<feature type="disulfide bond" evidence="4">
    <location>
        <begin position="295"/>
        <end position="367"/>
    </location>
</feature>
<feature type="disulfide bond" evidence="4">
    <location>
        <begin position="298"/>
        <end position="361"/>
    </location>
</feature>
<feature type="disulfide bond" evidence="4">
    <location>
        <begin position="326"/>
        <end position="337"/>
    </location>
</feature>
<feature type="disulfide bond" evidence="4">
    <location>
        <begin position="397"/>
        <end position="470"/>
    </location>
</feature>
<feature type="disulfide bond" evidence="4">
    <location>
        <begin position="400"/>
        <end position="464"/>
    </location>
</feature>
<feature type="disulfide bond" evidence="4">
    <location>
        <begin position="428"/>
        <end position="439"/>
    </location>
</feature>
<feature type="sequence conflict" description="In Ref. 1; BAC37363." evidence="6" ref="1">
    <original>L</original>
    <variation>Q</variation>
    <location>
        <position position="293"/>
    </location>
</feature>
<feature type="sequence conflict" description="In Ref. 1; BAC37363." evidence="6" ref="1">
    <original>P</original>
    <variation>T</variation>
    <location>
        <position position="432"/>
    </location>
</feature>
<feature type="sequence conflict" description="In Ref. 1; BAC37363." evidence="6" ref="1">
    <original>Q</original>
    <variation>H</variation>
    <location>
        <position position="438"/>
    </location>
</feature>
<comment type="function">
    <text evidence="1">May activate the lysosomal degradation of sphingolipids.</text>
</comment>
<comment type="subcellular location">
    <subcellularLocation>
        <location evidence="6">Secreted</location>
    </subcellularLocation>
</comment>
<comment type="sequence caution" evidence="6">
    <conflict type="frameshift">
        <sequence resource="EMBL-CDS" id="BAC25258"/>
    </conflict>
</comment>
<comment type="sequence caution" evidence="6">
    <conflict type="erroneous initiation">
        <sequence resource="EMBL-CDS" id="BAC25961"/>
    </conflict>
</comment>
<comment type="sequence caution" evidence="6">
    <conflict type="frameshift">
        <sequence resource="EMBL-CDS" id="BAC37363"/>
    </conflict>
</comment>
<keyword id="KW-1015">Disulfide bond</keyword>
<keyword id="KW-0325">Glycoprotein</keyword>
<keyword id="KW-0443">Lipid metabolism</keyword>
<keyword id="KW-1185">Reference proteome</keyword>
<keyword id="KW-0677">Repeat</keyword>
<keyword id="KW-0964">Secreted</keyword>
<keyword id="KW-0732">Signal</keyword>
<keyword id="KW-0746">Sphingolipid metabolism</keyword>
<organism>
    <name type="scientific">Mus musculus</name>
    <name type="common">Mouse</name>
    <dbReference type="NCBI Taxonomy" id="10090"/>
    <lineage>
        <taxon>Eukaryota</taxon>
        <taxon>Metazoa</taxon>
        <taxon>Chordata</taxon>
        <taxon>Craniata</taxon>
        <taxon>Vertebrata</taxon>
        <taxon>Euteleostomi</taxon>
        <taxon>Mammalia</taxon>
        <taxon>Eutheria</taxon>
        <taxon>Euarchontoglires</taxon>
        <taxon>Glires</taxon>
        <taxon>Rodentia</taxon>
        <taxon>Myomorpha</taxon>
        <taxon>Muroidea</taxon>
        <taxon>Muridae</taxon>
        <taxon>Murinae</taxon>
        <taxon>Mus</taxon>
        <taxon>Mus</taxon>
    </lineage>
</organism>
<dbReference type="EMBL" id="AK009408">
    <property type="protein sequence ID" value="BAC25258.1"/>
    <property type="status" value="ALT_FRAME"/>
    <property type="molecule type" value="mRNA"/>
</dbReference>
<dbReference type="EMBL" id="AK028455">
    <property type="protein sequence ID" value="BAC25961.1"/>
    <property type="status" value="ALT_INIT"/>
    <property type="molecule type" value="mRNA"/>
</dbReference>
<dbReference type="EMBL" id="AK078699">
    <property type="protein sequence ID" value="BAC37363.1"/>
    <property type="status" value="ALT_SEQ"/>
    <property type="molecule type" value="mRNA"/>
</dbReference>
<dbReference type="CCDS" id="CCDS39072.1"/>
<dbReference type="RefSeq" id="NP_780458.3">
    <property type="nucleotide sequence ID" value="NM_175249.4"/>
</dbReference>
<dbReference type="SMR" id="Q8C1C1"/>
<dbReference type="FunCoup" id="Q8C1C1">
    <property type="interactions" value="298"/>
</dbReference>
<dbReference type="STRING" id="10090.ENSMUSP00000100594"/>
<dbReference type="GlyCosmos" id="Q8C1C1">
    <property type="glycosylation" value="2 sites, No reported glycans"/>
</dbReference>
<dbReference type="GlyGen" id="Q8C1C1">
    <property type="glycosylation" value="2 sites"/>
</dbReference>
<dbReference type="iPTMnet" id="Q8C1C1"/>
<dbReference type="PhosphoSitePlus" id="Q8C1C1"/>
<dbReference type="CPTAC" id="non-CPTAC-4003"/>
<dbReference type="PaxDb" id="10090-ENSMUSP00000100594"/>
<dbReference type="PeptideAtlas" id="Q8C1C1"/>
<dbReference type="ProteomicsDB" id="256834"/>
<dbReference type="DNASU" id="76943"/>
<dbReference type="Ensembl" id="ENSMUST00000052224.7">
    <property type="protein sequence ID" value="ENSMUSP00000100594.3"/>
    <property type="gene ID" value="ENSMUSG00000043430.6"/>
</dbReference>
<dbReference type="GeneID" id="76943"/>
<dbReference type="KEGG" id="mmu:76943"/>
<dbReference type="UCSC" id="uc008xem.1">
    <property type="organism name" value="mouse"/>
</dbReference>
<dbReference type="AGR" id="MGI:1924193"/>
<dbReference type="CTD" id="768239"/>
<dbReference type="MGI" id="MGI:1924193">
    <property type="gene designation" value="Psapl1"/>
</dbReference>
<dbReference type="eggNOG" id="KOG1340">
    <property type="taxonomic scope" value="Eukaryota"/>
</dbReference>
<dbReference type="GeneTree" id="ENSGT00940000164031"/>
<dbReference type="InParanoid" id="Q8C1C1"/>
<dbReference type="OrthoDB" id="69496at2759"/>
<dbReference type="PhylomeDB" id="Q8C1C1"/>
<dbReference type="TreeFam" id="TF316942"/>
<dbReference type="BioGRID-ORCS" id="76943">
    <property type="hits" value="4 hits in 76 CRISPR screens"/>
</dbReference>
<dbReference type="ChiTaRS" id="Psapl1">
    <property type="organism name" value="mouse"/>
</dbReference>
<dbReference type="PRO" id="PR:Q8C1C1"/>
<dbReference type="Proteomes" id="UP000000589">
    <property type="component" value="Unplaced"/>
</dbReference>
<dbReference type="RNAct" id="Q8C1C1">
    <property type="molecule type" value="protein"/>
</dbReference>
<dbReference type="GO" id="GO:0005829">
    <property type="term" value="C:cytosol"/>
    <property type="evidence" value="ECO:0007669"/>
    <property type="project" value="Ensembl"/>
</dbReference>
<dbReference type="GO" id="GO:0005576">
    <property type="term" value="C:extracellular region"/>
    <property type="evidence" value="ECO:0007669"/>
    <property type="project" value="UniProtKB-SubCell"/>
</dbReference>
<dbReference type="GO" id="GO:0005764">
    <property type="term" value="C:lysosome"/>
    <property type="evidence" value="ECO:0007669"/>
    <property type="project" value="InterPro"/>
</dbReference>
<dbReference type="GO" id="GO:0016020">
    <property type="term" value="C:membrane"/>
    <property type="evidence" value="ECO:0007669"/>
    <property type="project" value="GOC"/>
</dbReference>
<dbReference type="GO" id="GO:0006665">
    <property type="term" value="P:sphingolipid metabolic process"/>
    <property type="evidence" value="ECO:0007669"/>
    <property type="project" value="UniProtKB-KW"/>
</dbReference>
<dbReference type="FunFam" id="1.10.225.10:FF:000014">
    <property type="entry name" value="Proactivator polypeptide-like 1"/>
    <property type="match status" value="1"/>
</dbReference>
<dbReference type="FunFam" id="1.10.225.10:FF:000002">
    <property type="entry name" value="prosaposin isoform X2"/>
    <property type="match status" value="3"/>
</dbReference>
<dbReference type="Gene3D" id="1.10.225.10">
    <property type="entry name" value="Saposin-like"/>
    <property type="match status" value="4"/>
</dbReference>
<dbReference type="InterPro" id="IPR003119">
    <property type="entry name" value="SAP_A"/>
</dbReference>
<dbReference type="InterPro" id="IPR007856">
    <property type="entry name" value="SapB_1"/>
</dbReference>
<dbReference type="InterPro" id="IPR008138">
    <property type="entry name" value="SapB_2"/>
</dbReference>
<dbReference type="InterPro" id="IPR008373">
    <property type="entry name" value="Saposin"/>
</dbReference>
<dbReference type="InterPro" id="IPR011001">
    <property type="entry name" value="Saposin-like"/>
</dbReference>
<dbReference type="InterPro" id="IPR021165">
    <property type="entry name" value="Saposin_chordata"/>
</dbReference>
<dbReference type="InterPro" id="IPR008139">
    <property type="entry name" value="SaposinB_dom"/>
</dbReference>
<dbReference type="InterPro" id="IPR051428">
    <property type="entry name" value="Sphingo_Act-Surfact_Prot"/>
</dbReference>
<dbReference type="PANTHER" id="PTHR11480:SF39">
    <property type="entry name" value="PROACTIVATOR POLYPEPTIDE-LIKE 1"/>
    <property type="match status" value="1"/>
</dbReference>
<dbReference type="PANTHER" id="PTHR11480">
    <property type="entry name" value="SAPOSIN-RELATED"/>
    <property type="match status" value="1"/>
</dbReference>
<dbReference type="Pfam" id="PF02199">
    <property type="entry name" value="SapA"/>
    <property type="match status" value="2"/>
</dbReference>
<dbReference type="Pfam" id="PF05184">
    <property type="entry name" value="SapB_1"/>
    <property type="match status" value="1"/>
</dbReference>
<dbReference type="Pfam" id="PF03489">
    <property type="entry name" value="SapB_2"/>
    <property type="match status" value="2"/>
</dbReference>
<dbReference type="PIRSF" id="PIRSF002431">
    <property type="entry name" value="Saposin"/>
    <property type="match status" value="1"/>
</dbReference>
<dbReference type="PRINTS" id="PR01797">
    <property type="entry name" value="SAPOSIN"/>
</dbReference>
<dbReference type="SMART" id="SM00162">
    <property type="entry name" value="SAPA"/>
    <property type="match status" value="2"/>
</dbReference>
<dbReference type="SMART" id="SM00741">
    <property type="entry name" value="SapB"/>
    <property type="match status" value="4"/>
</dbReference>
<dbReference type="SUPFAM" id="SSF47862">
    <property type="entry name" value="Saposin"/>
    <property type="match status" value="4"/>
</dbReference>
<dbReference type="PROSITE" id="PS51110">
    <property type="entry name" value="SAP_A"/>
    <property type="match status" value="2"/>
</dbReference>
<dbReference type="PROSITE" id="PS50015">
    <property type="entry name" value="SAP_B"/>
    <property type="match status" value="4"/>
</dbReference>
<protein>
    <recommendedName>
        <fullName>Proactivator polypeptide-like 1</fullName>
    </recommendedName>
    <component>
        <recommendedName>
            <fullName>Saposin A-like</fullName>
        </recommendedName>
    </component>
    <component>
        <recommendedName>
            <fullName>Saposin B-Val-like</fullName>
        </recommendedName>
    </component>
    <component>
        <recommendedName>
            <fullName>Saposin B-like</fullName>
        </recommendedName>
    </component>
    <component>
        <recommendedName>
            <fullName>Saposin C-like</fullName>
        </recommendedName>
    </component>
    <component>
        <recommendedName>
            <fullName>Saposin D-like</fullName>
        </recommendedName>
    </component>
</protein>
<accession>Q8C1C1</accession>
<accession>Q8BJV5</accession>
<accession>Q8C1N0</accession>
<name>SAPL1_MOUSE</name>
<gene>
    <name type="primary">Psapl1</name>
</gene>
<proteinExistence type="evidence at protein level"/>